<keyword id="KW-0002">3D-structure</keyword>
<keyword id="KW-1003">Cell membrane</keyword>
<keyword id="KW-0201">Cytochrome c-type biogenesis</keyword>
<keyword id="KW-1015">Disulfide bond</keyword>
<keyword id="KW-0472">Membrane</keyword>
<keyword id="KW-0676">Redox-active center</keyword>
<keyword id="KW-1185">Reference proteome</keyword>
<keyword id="KW-0812">Transmembrane</keyword>
<keyword id="KW-1133">Transmembrane helix</keyword>
<protein>
    <recommendedName>
        <fullName>Thiol:disulfide interchange protein TlpA</fullName>
    </recommendedName>
    <alternativeName>
        <fullName>Cytochrome c biogenesis protein TlpA</fullName>
    </alternativeName>
</protein>
<organism>
    <name type="scientific">Bradyrhizobium diazoefficiens (strain JCM 10833 / BCRC 13528 / IAM 13628 / NBRC 14792 / USDA 110)</name>
    <dbReference type="NCBI Taxonomy" id="224911"/>
    <lineage>
        <taxon>Bacteria</taxon>
        <taxon>Pseudomonadati</taxon>
        <taxon>Pseudomonadota</taxon>
        <taxon>Alphaproteobacteria</taxon>
        <taxon>Hyphomicrobiales</taxon>
        <taxon>Nitrobacteraceae</taxon>
        <taxon>Bradyrhizobium</taxon>
    </lineage>
</organism>
<sequence>MLDTKPSATRRIPLVIATVAVGGLAGFAALYGLGLSRAPTGDPACRAAVATAQKIAPLAHGEVAALTMASAPLKLPDLAFEDADGKPKKLSDFRGKTLLVNLWATWCVPCRKEMPALDELQGKLSGPNFEVVAINIDTRDPEKPKTFLKEANLTRLGYFNDQKAKVFQDLKAIGRALGMPTSVLVDPQGCEIATIAGPAEWASEDALKLIRAATGKAAAAL</sequence>
<accession>P43221</accession>
<feature type="chain" id="PRO_0000120177" description="Thiol:disulfide interchange protein TlpA">
    <location>
        <begin position="1"/>
        <end position="221"/>
    </location>
</feature>
<feature type="topological domain" description="Cytoplasmic" evidence="1">
    <location>
        <begin position="1"/>
        <end position="11"/>
    </location>
</feature>
<feature type="transmembrane region" description="Helical" evidence="1">
    <location>
        <begin position="12"/>
        <end position="35"/>
    </location>
</feature>
<feature type="topological domain" description="Periplasmic" evidence="1">
    <location>
        <begin position="36"/>
        <end position="221"/>
    </location>
</feature>
<feature type="domain" description="Thioredoxin" evidence="2">
    <location>
        <begin position="69"/>
        <end position="215"/>
    </location>
</feature>
<feature type="disulfide bond">
    <location>
        <begin position="45"/>
        <end position="190"/>
    </location>
</feature>
<feature type="disulfide bond" description="Redox-active">
    <location>
        <begin position="107"/>
        <end position="110"/>
    </location>
</feature>
<feature type="helix" evidence="4">
    <location>
        <begin position="43"/>
        <end position="45"/>
    </location>
</feature>
<feature type="helix" evidence="4">
    <location>
        <begin position="46"/>
        <end position="55"/>
    </location>
</feature>
<feature type="helix" evidence="4">
    <location>
        <begin position="56"/>
        <end position="58"/>
    </location>
</feature>
<feature type="helix" evidence="4">
    <location>
        <begin position="61"/>
        <end position="63"/>
    </location>
</feature>
<feature type="strand" evidence="4">
    <location>
        <begin position="79"/>
        <end position="81"/>
    </location>
</feature>
<feature type="strand" evidence="4">
    <location>
        <begin position="87"/>
        <end position="89"/>
    </location>
</feature>
<feature type="helix" evidence="4">
    <location>
        <begin position="90"/>
        <end position="93"/>
    </location>
</feature>
<feature type="strand" evidence="4">
    <location>
        <begin position="96"/>
        <end position="103"/>
    </location>
</feature>
<feature type="helix" evidence="4">
    <location>
        <begin position="108"/>
        <end position="124"/>
    </location>
</feature>
<feature type="strand" evidence="4">
    <location>
        <begin position="129"/>
        <end position="135"/>
    </location>
</feature>
<feature type="helix" evidence="4">
    <location>
        <begin position="143"/>
        <end position="150"/>
    </location>
</feature>
<feature type="helix" evidence="4">
    <location>
        <begin position="165"/>
        <end position="171"/>
    </location>
</feature>
<feature type="turn" evidence="4">
    <location>
        <begin position="172"/>
        <end position="174"/>
    </location>
</feature>
<feature type="strand" evidence="4">
    <location>
        <begin position="177"/>
        <end position="185"/>
    </location>
</feature>
<feature type="strand" evidence="4">
    <location>
        <begin position="189"/>
        <end position="197"/>
    </location>
</feature>
<feature type="helix" evidence="4">
    <location>
        <begin position="204"/>
        <end position="214"/>
    </location>
</feature>
<comment type="function">
    <text>Involved in cytochrome aa3 assembly.</text>
</comment>
<comment type="subunit">
    <text>Monomer.</text>
</comment>
<comment type="interaction">
    <interactant intactId="EBI-8146602">
        <id>P43221</id>
    </interactant>
    <interactant intactId="EBI-8146640">
        <id>Q89VB6</id>
        <label>blr1131</label>
    </interactant>
    <organismsDiffer>false</organismsDiffer>
    <experiments>3</experiments>
</comment>
<comment type="subcellular location">
    <subcellularLocation>
        <location>Cell membrane</location>
        <topology>Single-pass type II membrane protein</topology>
        <orientation>Periplasmic side</orientation>
    </subcellularLocation>
</comment>
<comment type="similarity">
    <text evidence="3">Belongs to the thioredoxin family.</text>
</comment>
<dbReference type="EMBL" id="Z23140">
    <property type="protein sequence ID" value="CAA80671.1"/>
    <property type="molecule type" value="Genomic_DNA"/>
</dbReference>
<dbReference type="EMBL" id="BA000040">
    <property type="protein sequence ID" value="BAC46645.1"/>
    <property type="molecule type" value="Genomic_DNA"/>
</dbReference>
<dbReference type="PIR" id="S40401">
    <property type="entry name" value="S40401"/>
</dbReference>
<dbReference type="RefSeq" id="NP_768020.1">
    <property type="nucleotide sequence ID" value="NC_004463.1"/>
</dbReference>
<dbReference type="RefSeq" id="WP_011084198.1">
    <property type="nucleotide sequence ID" value="NC_004463.1"/>
</dbReference>
<dbReference type="PDB" id="1JFU">
    <property type="method" value="X-ray"/>
    <property type="resolution" value="1.60 A"/>
    <property type="chains" value="A/B=36-221"/>
</dbReference>
<dbReference type="PDB" id="4TXO">
    <property type="method" value="X-ray"/>
    <property type="resolution" value="2.20 A"/>
    <property type="chains" value="A/C/E/G=38-221"/>
</dbReference>
<dbReference type="PDB" id="4TXV">
    <property type="method" value="X-ray"/>
    <property type="resolution" value="2.00 A"/>
    <property type="chains" value="A/C=40-217"/>
</dbReference>
<dbReference type="PDBsum" id="1JFU"/>
<dbReference type="PDBsum" id="4TXO"/>
<dbReference type="PDBsum" id="4TXV"/>
<dbReference type="SMR" id="P43221"/>
<dbReference type="IntAct" id="P43221">
    <property type="interactions" value="1"/>
</dbReference>
<dbReference type="MINT" id="P43221"/>
<dbReference type="STRING" id="224911.AAV28_03815"/>
<dbReference type="EnsemblBacteria" id="BAC46645">
    <property type="protein sequence ID" value="BAC46645"/>
    <property type="gene ID" value="BAC46645"/>
</dbReference>
<dbReference type="GeneID" id="46488649"/>
<dbReference type="KEGG" id="bja:bll1380"/>
<dbReference type="PATRIC" id="fig|224911.44.peg.803"/>
<dbReference type="eggNOG" id="COG0526">
    <property type="taxonomic scope" value="Bacteria"/>
</dbReference>
<dbReference type="HOGENOM" id="CLU_042529_11_0_5"/>
<dbReference type="InParanoid" id="P43221"/>
<dbReference type="OrthoDB" id="9799347at2"/>
<dbReference type="PhylomeDB" id="P43221"/>
<dbReference type="EvolutionaryTrace" id="P43221"/>
<dbReference type="Proteomes" id="UP000002526">
    <property type="component" value="Chromosome"/>
</dbReference>
<dbReference type="GO" id="GO:0005886">
    <property type="term" value="C:plasma membrane"/>
    <property type="evidence" value="ECO:0007669"/>
    <property type="project" value="UniProtKB-SubCell"/>
</dbReference>
<dbReference type="GO" id="GO:0015036">
    <property type="term" value="F:disulfide oxidoreductase activity"/>
    <property type="evidence" value="ECO:0007669"/>
    <property type="project" value="UniProtKB-ARBA"/>
</dbReference>
<dbReference type="GO" id="GO:0017004">
    <property type="term" value="P:cytochrome complex assembly"/>
    <property type="evidence" value="ECO:0007669"/>
    <property type="project" value="UniProtKB-KW"/>
</dbReference>
<dbReference type="CDD" id="cd02966">
    <property type="entry name" value="TlpA_like_family"/>
    <property type="match status" value="1"/>
</dbReference>
<dbReference type="Gene3D" id="3.40.30.10">
    <property type="entry name" value="Glutaredoxin"/>
    <property type="match status" value="1"/>
</dbReference>
<dbReference type="InterPro" id="IPR013740">
    <property type="entry name" value="Redoxin"/>
</dbReference>
<dbReference type="InterPro" id="IPR036249">
    <property type="entry name" value="Thioredoxin-like_sf"/>
</dbReference>
<dbReference type="InterPro" id="IPR017937">
    <property type="entry name" value="Thioredoxin_CS"/>
</dbReference>
<dbReference type="InterPro" id="IPR013766">
    <property type="entry name" value="Thioredoxin_domain"/>
</dbReference>
<dbReference type="InterPro" id="IPR050455">
    <property type="entry name" value="Tpx_Peroxidase_subfamily"/>
</dbReference>
<dbReference type="NCBIfam" id="NF047696">
    <property type="entry name" value="ThlDiSintTplARhiz"/>
    <property type="match status" value="1"/>
</dbReference>
<dbReference type="PANTHER" id="PTHR43110">
    <property type="entry name" value="THIOL PEROXIDASE"/>
    <property type="match status" value="1"/>
</dbReference>
<dbReference type="PANTHER" id="PTHR43110:SF1">
    <property type="entry name" value="THIOL PEROXIDASE"/>
    <property type="match status" value="1"/>
</dbReference>
<dbReference type="Pfam" id="PF08534">
    <property type="entry name" value="Redoxin"/>
    <property type="match status" value="1"/>
</dbReference>
<dbReference type="SUPFAM" id="SSF52833">
    <property type="entry name" value="Thioredoxin-like"/>
    <property type="match status" value="1"/>
</dbReference>
<dbReference type="PROSITE" id="PS00194">
    <property type="entry name" value="THIOREDOXIN_1"/>
    <property type="match status" value="1"/>
</dbReference>
<dbReference type="PROSITE" id="PS51352">
    <property type="entry name" value="THIOREDOXIN_2"/>
    <property type="match status" value="1"/>
</dbReference>
<name>TLPA_BRADU</name>
<reference key="1">
    <citation type="journal article" date="1993" name="EMBO J.">
        <title>Bradyrhizobium japonicum TlpA, a novel membrane-anchored thioredoxin-like protein involved in the biogenesis of cytochrome aa3 and development of symbiosis.</title>
        <authorList>
            <person name="Loferer H."/>
            <person name="Bott M."/>
            <person name="Hennecke H."/>
        </authorList>
    </citation>
    <scope>NUCLEOTIDE SEQUENCE [GENOMIC DNA]</scope>
    <source>
        <strain>JCM 10833 / BCRC 13528 / IAM 13628 / NBRC 14792 / USDA 110</strain>
    </source>
</reference>
<reference key="2">
    <citation type="journal article" date="2002" name="DNA Res.">
        <title>Complete genomic sequence of nitrogen-fixing symbiotic bacterium Bradyrhizobium japonicum USDA110.</title>
        <authorList>
            <person name="Kaneko T."/>
            <person name="Nakamura Y."/>
            <person name="Sato S."/>
            <person name="Minamisawa K."/>
            <person name="Uchiumi T."/>
            <person name="Sasamoto S."/>
            <person name="Watanabe A."/>
            <person name="Idesawa K."/>
            <person name="Iriguchi M."/>
            <person name="Kawashima K."/>
            <person name="Kohara M."/>
            <person name="Matsumoto M."/>
            <person name="Shimpo S."/>
            <person name="Tsuruoka H."/>
            <person name="Wada T."/>
            <person name="Yamada M."/>
            <person name="Tabata S."/>
        </authorList>
    </citation>
    <scope>NUCLEOTIDE SEQUENCE [LARGE SCALE GENOMIC DNA]</scope>
    <source>
        <strain>JCM 10833 / BCRC 13528 / IAM 13628 / NBRC 14792 / USDA 110</strain>
    </source>
</reference>
<reference key="3">
    <citation type="journal article" date="1994" name="Eur. J. Biochem.">
        <title>Expression, purification and functional properties of a soluble form of Bradyrhizobium japonicum TlpA, a thioredoxin-like protein.</title>
        <authorList>
            <person name="Loferer H."/>
            <person name="Hennecke H."/>
        </authorList>
    </citation>
    <scope>CHARACTERIZATION</scope>
    <scope>DISULFIDE BOND</scope>
</reference>
<reference key="4">
    <citation type="journal article" date="2001" name="J. Mol. Biol.">
        <title>Structure of the soluble domain of a membrane-anchored thioredoxin-like protein from Bradyrhizobium japonicum reveals unusual properties.</title>
        <authorList>
            <person name="Capitani G."/>
            <person name="Rossmann R."/>
            <person name="Sargent D.F."/>
            <person name="Gruetter M.G."/>
            <person name="Richmond T.J."/>
            <person name="Hennecke H."/>
        </authorList>
    </citation>
    <scope>X-RAY CRYSTALLOGRAPHY (1.6 ANGSTROMS) OF 36-221</scope>
    <scope>DISULFIDE BONDS</scope>
</reference>
<gene>
    <name type="primary">tlpA</name>
    <name type="ordered locus">bll1380</name>
</gene>
<proteinExistence type="evidence at protein level"/>
<evidence type="ECO:0000255" key="1"/>
<evidence type="ECO:0000255" key="2">
    <source>
        <dbReference type="PROSITE-ProRule" id="PRU00691"/>
    </source>
</evidence>
<evidence type="ECO:0000305" key="3"/>
<evidence type="ECO:0007829" key="4">
    <source>
        <dbReference type="PDB" id="1JFU"/>
    </source>
</evidence>